<evidence type="ECO:0000250" key="1">
    <source>
        <dbReference type="UniProtKB" id="A5K464"/>
    </source>
</evidence>
<evidence type="ECO:0000250" key="2">
    <source>
        <dbReference type="UniProtKB" id="Q9NSD9"/>
    </source>
</evidence>
<evidence type="ECO:0000255" key="3">
    <source>
        <dbReference type="PROSITE-ProRule" id="PRU00816"/>
    </source>
</evidence>
<evidence type="ECO:0000305" key="4"/>
<sequence>MPTVSVKRDLLFQALGRTYTDEEFDELCFEFGLELDEITSEKQIISKEQGHGKAQGASDVVLYKIDVPANRYDLLCLEGLARGLQVFKERIKAPVYKRVMPKGDIQKLVITEETAKVRPFAVAAVLRNIKFTKDRYDSFIELQEKLHQNICRKRALVAIGTHDLDTLSGPFTYTAKRPSDIKFKPLNKTKEYTACELMNIYKTDNHLKHYLHIIESKPLYPVIYDSNGVVLSMPPIINGNHSKITVNTRNIFIECTGTDFTKAKIVLDIIVTMFSEHCENQFTVEAVEVVSPNGKSSTFPELPYRKEMVRADLINKKVGIRETPANLAKLLTRMCLKSEVIGDGNQIEVEIPPTRADVIHACDIVEDAAIAYGYNNIQMTLPKTYTIANQFPLNKLTELLRLDMAAAGFTEALTFALCSQEDIADKLGLDISATKAVHISNPKTAEFQVARTTLLPGLLKTIAANRKMPLPLKLFEISDVVVKDSGKDVGAKNYRHLCAVYYNKTPGFEIIHGLLDRIMQLLDVPPGEESGGYMIKASAGSAFFPGRCAEIFVGGQSIGKLGVLHPDVITKFELTMPCSSLEINIEPFL</sequence>
<reference key="1">
    <citation type="journal article" date="1999" name="Gene">
        <title>Cloning of the cDNA encoding phenylalanyl tRNA synthetase regulatory alpha-subunit-like protein whose expression is down-regulated during differentiation.</title>
        <authorList>
            <person name="Zhou X.-B."/>
            <person name="Richon V.M."/>
            <person name="Ngo L."/>
            <person name="Rifkind R.A."/>
            <person name="Marks P.A."/>
        </authorList>
    </citation>
    <scope>NUCLEOTIDE SEQUENCE [MRNA]</scope>
</reference>
<reference key="2">
    <citation type="journal article" date="2005" name="Science">
        <title>The transcriptional landscape of the mammalian genome.</title>
        <authorList>
            <person name="Carninci P."/>
            <person name="Kasukawa T."/>
            <person name="Katayama S."/>
            <person name="Gough J."/>
            <person name="Frith M.C."/>
            <person name="Maeda N."/>
            <person name="Oyama R."/>
            <person name="Ravasi T."/>
            <person name="Lenhard B."/>
            <person name="Wells C."/>
            <person name="Kodzius R."/>
            <person name="Shimokawa K."/>
            <person name="Bajic V.B."/>
            <person name="Brenner S.E."/>
            <person name="Batalov S."/>
            <person name="Forrest A.R."/>
            <person name="Zavolan M."/>
            <person name="Davis M.J."/>
            <person name="Wilming L.G."/>
            <person name="Aidinis V."/>
            <person name="Allen J.E."/>
            <person name="Ambesi-Impiombato A."/>
            <person name="Apweiler R."/>
            <person name="Aturaliya R.N."/>
            <person name="Bailey T.L."/>
            <person name="Bansal M."/>
            <person name="Baxter L."/>
            <person name="Beisel K.W."/>
            <person name="Bersano T."/>
            <person name="Bono H."/>
            <person name="Chalk A.M."/>
            <person name="Chiu K.P."/>
            <person name="Choudhary V."/>
            <person name="Christoffels A."/>
            <person name="Clutterbuck D.R."/>
            <person name="Crowe M.L."/>
            <person name="Dalla E."/>
            <person name="Dalrymple B.P."/>
            <person name="de Bono B."/>
            <person name="Della Gatta G."/>
            <person name="di Bernardo D."/>
            <person name="Down T."/>
            <person name="Engstrom P."/>
            <person name="Fagiolini M."/>
            <person name="Faulkner G."/>
            <person name="Fletcher C.F."/>
            <person name="Fukushima T."/>
            <person name="Furuno M."/>
            <person name="Futaki S."/>
            <person name="Gariboldi M."/>
            <person name="Georgii-Hemming P."/>
            <person name="Gingeras T.R."/>
            <person name="Gojobori T."/>
            <person name="Green R.E."/>
            <person name="Gustincich S."/>
            <person name="Harbers M."/>
            <person name="Hayashi Y."/>
            <person name="Hensch T.K."/>
            <person name="Hirokawa N."/>
            <person name="Hill D."/>
            <person name="Huminiecki L."/>
            <person name="Iacono M."/>
            <person name="Ikeo K."/>
            <person name="Iwama A."/>
            <person name="Ishikawa T."/>
            <person name="Jakt M."/>
            <person name="Kanapin A."/>
            <person name="Katoh M."/>
            <person name="Kawasawa Y."/>
            <person name="Kelso J."/>
            <person name="Kitamura H."/>
            <person name="Kitano H."/>
            <person name="Kollias G."/>
            <person name="Krishnan S.P."/>
            <person name="Kruger A."/>
            <person name="Kummerfeld S.K."/>
            <person name="Kurochkin I.V."/>
            <person name="Lareau L.F."/>
            <person name="Lazarevic D."/>
            <person name="Lipovich L."/>
            <person name="Liu J."/>
            <person name="Liuni S."/>
            <person name="McWilliam S."/>
            <person name="Madan Babu M."/>
            <person name="Madera M."/>
            <person name="Marchionni L."/>
            <person name="Matsuda H."/>
            <person name="Matsuzawa S."/>
            <person name="Miki H."/>
            <person name="Mignone F."/>
            <person name="Miyake S."/>
            <person name="Morris K."/>
            <person name="Mottagui-Tabar S."/>
            <person name="Mulder N."/>
            <person name="Nakano N."/>
            <person name="Nakauchi H."/>
            <person name="Ng P."/>
            <person name="Nilsson R."/>
            <person name="Nishiguchi S."/>
            <person name="Nishikawa S."/>
            <person name="Nori F."/>
            <person name="Ohara O."/>
            <person name="Okazaki Y."/>
            <person name="Orlando V."/>
            <person name="Pang K.C."/>
            <person name="Pavan W.J."/>
            <person name="Pavesi G."/>
            <person name="Pesole G."/>
            <person name="Petrovsky N."/>
            <person name="Piazza S."/>
            <person name="Reed J."/>
            <person name="Reid J.F."/>
            <person name="Ring B.Z."/>
            <person name="Ringwald M."/>
            <person name="Rost B."/>
            <person name="Ruan Y."/>
            <person name="Salzberg S.L."/>
            <person name="Sandelin A."/>
            <person name="Schneider C."/>
            <person name="Schoenbach C."/>
            <person name="Sekiguchi K."/>
            <person name="Semple C.A."/>
            <person name="Seno S."/>
            <person name="Sessa L."/>
            <person name="Sheng Y."/>
            <person name="Shibata Y."/>
            <person name="Shimada H."/>
            <person name="Shimada K."/>
            <person name="Silva D."/>
            <person name="Sinclair B."/>
            <person name="Sperling S."/>
            <person name="Stupka E."/>
            <person name="Sugiura K."/>
            <person name="Sultana R."/>
            <person name="Takenaka Y."/>
            <person name="Taki K."/>
            <person name="Tammoja K."/>
            <person name="Tan S.L."/>
            <person name="Tang S."/>
            <person name="Taylor M.S."/>
            <person name="Tegner J."/>
            <person name="Teichmann S.A."/>
            <person name="Ueda H.R."/>
            <person name="van Nimwegen E."/>
            <person name="Verardo R."/>
            <person name="Wei C.L."/>
            <person name="Yagi K."/>
            <person name="Yamanishi H."/>
            <person name="Zabarovsky E."/>
            <person name="Zhu S."/>
            <person name="Zimmer A."/>
            <person name="Hide W."/>
            <person name="Bult C."/>
            <person name="Grimmond S.M."/>
            <person name="Teasdale R.D."/>
            <person name="Liu E.T."/>
            <person name="Brusic V."/>
            <person name="Quackenbush J."/>
            <person name="Wahlestedt C."/>
            <person name="Mattick J.S."/>
            <person name="Hume D.A."/>
            <person name="Kai C."/>
            <person name="Sasaki D."/>
            <person name="Tomaru Y."/>
            <person name="Fukuda S."/>
            <person name="Kanamori-Katayama M."/>
            <person name="Suzuki M."/>
            <person name="Aoki J."/>
            <person name="Arakawa T."/>
            <person name="Iida J."/>
            <person name="Imamura K."/>
            <person name="Itoh M."/>
            <person name="Kato T."/>
            <person name="Kawaji H."/>
            <person name="Kawagashira N."/>
            <person name="Kawashima T."/>
            <person name="Kojima M."/>
            <person name="Kondo S."/>
            <person name="Konno H."/>
            <person name="Nakano K."/>
            <person name="Ninomiya N."/>
            <person name="Nishio T."/>
            <person name="Okada M."/>
            <person name="Plessy C."/>
            <person name="Shibata K."/>
            <person name="Shiraki T."/>
            <person name="Suzuki S."/>
            <person name="Tagami M."/>
            <person name="Waki K."/>
            <person name="Watahiki A."/>
            <person name="Okamura-Oho Y."/>
            <person name="Suzuki H."/>
            <person name="Kawai J."/>
            <person name="Hayashizaki Y."/>
        </authorList>
    </citation>
    <scope>NUCLEOTIDE SEQUENCE [LARGE SCALE MRNA]</scope>
    <source>
        <strain>C57BL/6J</strain>
        <tissue>Corpora quadrigemina</tissue>
    </source>
</reference>
<reference key="3">
    <citation type="journal article" date="2004" name="Genome Res.">
        <title>The status, quality, and expansion of the NIH full-length cDNA project: the Mammalian Gene Collection (MGC).</title>
        <authorList>
            <consortium name="The MGC Project Team"/>
        </authorList>
    </citation>
    <scope>NUCLEOTIDE SEQUENCE [LARGE SCALE MRNA]</scope>
    <source>
        <strain>FVB/N</strain>
        <tissue>Kidney</tissue>
    </source>
</reference>
<reference key="4">
    <citation type="journal article" date="2010" name="Cell">
        <title>A tissue-specific atlas of mouse protein phosphorylation and expression.</title>
        <authorList>
            <person name="Huttlin E.L."/>
            <person name="Jedrychowski M.P."/>
            <person name="Elias J.E."/>
            <person name="Goswami T."/>
            <person name="Rad R."/>
            <person name="Beausoleil S.A."/>
            <person name="Villen J."/>
            <person name="Haas W."/>
            <person name="Sowa M.E."/>
            <person name="Gygi S.P."/>
        </authorList>
    </citation>
    <scope>IDENTIFICATION BY MASS SPECTROMETRY [LARGE SCALE ANALYSIS]</scope>
    <source>
        <tissue>Brain</tissue>
        <tissue>Brown adipose tissue</tissue>
        <tissue>Heart</tissue>
        <tissue>Kidney</tissue>
        <tissue>Liver</tissue>
        <tissue>Lung</tissue>
        <tissue>Pancreas</tissue>
        <tissue>Spleen</tissue>
        <tissue>Testis</tissue>
    </source>
</reference>
<name>SYFB_MOUSE</name>
<protein>
    <recommendedName>
        <fullName>Phenylalanine--tRNA ligase beta subunit</fullName>
        <ecNumber evidence="2">6.1.1.20</ecNumber>
    </recommendedName>
    <alternativeName>
        <fullName>Phenylalanyl-tRNA synthetase beta subunit</fullName>
        <shortName>PheRS</shortName>
    </alternativeName>
</protein>
<feature type="chain" id="PRO_0000127017" description="Phenylalanine--tRNA ligase beta subunit">
    <location>
        <begin position="1"/>
        <end position="589"/>
    </location>
</feature>
<feature type="domain" description="B5" evidence="3">
    <location>
        <begin position="302"/>
        <end position="379"/>
    </location>
</feature>
<feature type="binding site" evidence="3">
    <location>
        <position position="357"/>
    </location>
    <ligand>
        <name>Mg(2+)</name>
        <dbReference type="ChEBI" id="CHEBI:18420"/>
        <note>shared with alpha subunit</note>
    </ligand>
</feature>
<feature type="binding site" evidence="3">
    <location>
        <position position="363"/>
    </location>
    <ligand>
        <name>Mg(2+)</name>
        <dbReference type="ChEBI" id="CHEBI:18420"/>
        <note>shared with alpha subunit</note>
    </ligand>
</feature>
<feature type="binding site" evidence="3">
    <location>
        <position position="366"/>
    </location>
    <ligand>
        <name>Mg(2+)</name>
        <dbReference type="ChEBI" id="CHEBI:18420"/>
        <note>shared with alpha subunit</note>
    </ligand>
</feature>
<feature type="binding site" evidence="3">
    <location>
        <position position="367"/>
    </location>
    <ligand>
        <name>Mg(2+)</name>
        <dbReference type="ChEBI" id="CHEBI:18420"/>
        <note>shared with alpha subunit</note>
    </ligand>
</feature>
<feature type="sequence conflict" description="In Ref. 1; AAD26855 and 3; AAH16428." evidence="4" ref="1 3">
    <original>N</original>
    <variation>S</variation>
    <location>
        <position position="503"/>
    </location>
</feature>
<gene>
    <name type="primary">Farsb</name>
    <name type="synonym">Farsl</name>
    <name type="synonym">Farslb</name>
    <name type="synonym">Frsb</name>
</gene>
<dbReference type="EC" id="6.1.1.20" evidence="2"/>
<dbReference type="EMBL" id="AF123263">
    <property type="protein sequence ID" value="AAD26855.1"/>
    <property type="molecule type" value="mRNA"/>
</dbReference>
<dbReference type="EMBL" id="AK010271">
    <property type="protein sequence ID" value="BAB26810.1"/>
    <property type="molecule type" value="mRNA"/>
</dbReference>
<dbReference type="EMBL" id="AK045432">
    <property type="protein sequence ID" value="BAC32363.1"/>
    <property type="molecule type" value="mRNA"/>
</dbReference>
<dbReference type="EMBL" id="BC016428">
    <property type="protein sequence ID" value="AAH16428.1"/>
    <property type="molecule type" value="mRNA"/>
</dbReference>
<dbReference type="CCDS" id="CCDS15084.1"/>
<dbReference type="RefSeq" id="NP_001265004.1">
    <property type="nucleotide sequence ID" value="NM_001278075.2"/>
</dbReference>
<dbReference type="RefSeq" id="NP_035941.2">
    <property type="nucleotide sequence ID" value="NM_011811.4"/>
</dbReference>
<dbReference type="SMR" id="Q9WUA2"/>
<dbReference type="BioGRID" id="204768">
    <property type="interactions" value="23"/>
</dbReference>
<dbReference type="FunCoup" id="Q9WUA2">
    <property type="interactions" value="2035"/>
</dbReference>
<dbReference type="IntAct" id="Q9WUA2">
    <property type="interactions" value="4"/>
</dbReference>
<dbReference type="MINT" id="Q9WUA2"/>
<dbReference type="STRING" id="10090.ENSMUSP00000129828"/>
<dbReference type="GlyGen" id="Q9WUA2">
    <property type="glycosylation" value="1 site, 1 O-linked glycan (1 site)"/>
</dbReference>
<dbReference type="iPTMnet" id="Q9WUA2"/>
<dbReference type="PhosphoSitePlus" id="Q9WUA2"/>
<dbReference type="SwissPalm" id="Q9WUA2"/>
<dbReference type="jPOST" id="Q9WUA2"/>
<dbReference type="PaxDb" id="10090-ENSMUSP00000129828"/>
<dbReference type="ProteomicsDB" id="254788"/>
<dbReference type="Pumba" id="Q9WUA2"/>
<dbReference type="Antibodypedia" id="34360">
    <property type="antibodies" value="283 antibodies from 29 providers"/>
</dbReference>
<dbReference type="DNASU" id="23874"/>
<dbReference type="Ensembl" id="ENSMUST00000068333.14">
    <property type="protein sequence ID" value="ENSMUSP00000069508.8"/>
    <property type="gene ID" value="ENSMUSG00000026245.17"/>
</dbReference>
<dbReference type="Ensembl" id="ENSMUST00000170217.8">
    <property type="protein sequence ID" value="ENSMUSP00000129828.2"/>
    <property type="gene ID" value="ENSMUSG00000026245.17"/>
</dbReference>
<dbReference type="GeneID" id="23874"/>
<dbReference type="KEGG" id="mmu:23874"/>
<dbReference type="UCSC" id="uc007bqf.2">
    <property type="organism name" value="mouse"/>
</dbReference>
<dbReference type="AGR" id="MGI:1346035"/>
<dbReference type="CTD" id="10056"/>
<dbReference type="MGI" id="MGI:1346035">
    <property type="gene designation" value="Farsb"/>
</dbReference>
<dbReference type="VEuPathDB" id="HostDB:ENSMUSG00000026245"/>
<dbReference type="eggNOG" id="KOG2472">
    <property type="taxonomic scope" value="Eukaryota"/>
</dbReference>
<dbReference type="GeneTree" id="ENSGT00530000063489"/>
<dbReference type="HOGENOM" id="CLU_020279_2_0_1"/>
<dbReference type="InParanoid" id="Q9WUA2"/>
<dbReference type="OMA" id="FPGRCAN"/>
<dbReference type="OrthoDB" id="1698572at2759"/>
<dbReference type="PhylomeDB" id="Q9WUA2"/>
<dbReference type="TreeFam" id="TF105681"/>
<dbReference type="BioGRID-ORCS" id="23874">
    <property type="hits" value="29 hits in 78 CRISPR screens"/>
</dbReference>
<dbReference type="CD-CODE" id="CE726F99">
    <property type="entry name" value="Postsynaptic density"/>
</dbReference>
<dbReference type="ChiTaRS" id="Farsb">
    <property type="organism name" value="mouse"/>
</dbReference>
<dbReference type="PRO" id="PR:Q9WUA2"/>
<dbReference type="Proteomes" id="UP000000589">
    <property type="component" value="Chromosome 1"/>
</dbReference>
<dbReference type="RNAct" id="Q9WUA2">
    <property type="molecule type" value="protein"/>
</dbReference>
<dbReference type="Bgee" id="ENSMUSG00000026245">
    <property type="expression patterns" value="Expressed in primitive streak and 277 other cell types or tissues"/>
</dbReference>
<dbReference type="ExpressionAtlas" id="Q9WUA2">
    <property type="expression patterns" value="baseline and differential"/>
</dbReference>
<dbReference type="GO" id="GO:0009328">
    <property type="term" value="C:phenylalanine-tRNA ligase complex"/>
    <property type="evidence" value="ECO:0000250"/>
    <property type="project" value="UniProtKB"/>
</dbReference>
<dbReference type="GO" id="GO:0005524">
    <property type="term" value="F:ATP binding"/>
    <property type="evidence" value="ECO:0007669"/>
    <property type="project" value="UniProtKB-KW"/>
</dbReference>
<dbReference type="GO" id="GO:0000287">
    <property type="term" value="F:magnesium ion binding"/>
    <property type="evidence" value="ECO:0000250"/>
    <property type="project" value="UniProtKB"/>
</dbReference>
<dbReference type="GO" id="GO:0004826">
    <property type="term" value="F:phenylalanine-tRNA ligase activity"/>
    <property type="evidence" value="ECO:0000250"/>
    <property type="project" value="UniProtKB"/>
</dbReference>
<dbReference type="GO" id="GO:0003723">
    <property type="term" value="F:RNA binding"/>
    <property type="evidence" value="ECO:0007669"/>
    <property type="project" value="InterPro"/>
</dbReference>
<dbReference type="GO" id="GO:0006432">
    <property type="term" value="P:phenylalanyl-tRNA aminoacylation"/>
    <property type="evidence" value="ECO:0000250"/>
    <property type="project" value="UniProtKB"/>
</dbReference>
<dbReference type="GO" id="GO:0051290">
    <property type="term" value="P:protein heterotetramerization"/>
    <property type="evidence" value="ECO:0000250"/>
    <property type="project" value="UniProtKB"/>
</dbReference>
<dbReference type="CDD" id="cd00769">
    <property type="entry name" value="PheRS_beta_core"/>
    <property type="match status" value="1"/>
</dbReference>
<dbReference type="FunFam" id="3.30.56.10:FF:000003">
    <property type="entry name" value="Phenylalanine--tRNA ligase beta subunit"/>
    <property type="match status" value="1"/>
</dbReference>
<dbReference type="FunFam" id="3.30.56.10:FF:000007">
    <property type="entry name" value="Phenylalanine--tRNA ligase beta subunit"/>
    <property type="match status" value="1"/>
</dbReference>
<dbReference type="FunFam" id="3.30.930.10:FF:000032">
    <property type="entry name" value="Phenylalanine--tRNA ligase beta subunit"/>
    <property type="match status" value="1"/>
</dbReference>
<dbReference type="FunFam" id="3.50.40.10:FF:000002">
    <property type="entry name" value="phenylalanine--tRNA ligase beta subunit"/>
    <property type="match status" value="1"/>
</dbReference>
<dbReference type="Gene3D" id="3.30.56.10">
    <property type="match status" value="2"/>
</dbReference>
<dbReference type="Gene3D" id="3.30.930.10">
    <property type="entry name" value="Bira Bifunctional Protein, Domain 2"/>
    <property type="match status" value="1"/>
</dbReference>
<dbReference type="Gene3D" id="3.50.40.10">
    <property type="entry name" value="Phenylalanyl-trna Synthetase, Chain B, domain 3"/>
    <property type="match status" value="1"/>
</dbReference>
<dbReference type="InterPro" id="IPR045864">
    <property type="entry name" value="aa-tRNA-synth_II/BPL/LPL"/>
</dbReference>
<dbReference type="InterPro" id="IPR005146">
    <property type="entry name" value="B3/B4_tRNA-bd"/>
</dbReference>
<dbReference type="InterPro" id="IPR009061">
    <property type="entry name" value="DNA-bd_dom_put_sf"/>
</dbReference>
<dbReference type="InterPro" id="IPR045060">
    <property type="entry name" value="Phe-tRNA-ligase_IIc_bsu"/>
</dbReference>
<dbReference type="InterPro" id="IPR004531">
    <property type="entry name" value="Phe-tRNA-synth_IIc_bsu_arc_euk"/>
</dbReference>
<dbReference type="InterPro" id="IPR020825">
    <property type="entry name" value="Phe-tRNA_synthase-like_B3/B4"/>
</dbReference>
<dbReference type="InterPro" id="IPR041616">
    <property type="entry name" value="PheRS_beta_core"/>
</dbReference>
<dbReference type="InterPro" id="IPR040659">
    <property type="entry name" value="PhetRS_B1"/>
</dbReference>
<dbReference type="InterPro" id="IPR005147">
    <property type="entry name" value="tRNA_synthase_B5-dom"/>
</dbReference>
<dbReference type="NCBIfam" id="TIGR00471">
    <property type="entry name" value="pheT_arch"/>
    <property type="match status" value="1"/>
</dbReference>
<dbReference type="PANTHER" id="PTHR10947:SF0">
    <property type="entry name" value="PHENYLALANINE--TRNA LIGASE BETA SUBUNIT"/>
    <property type="match status" value="1"/>
</dbReference>
<dbReference type="PANTHER" id="PTHR10947">
    <property type="entry name" value="PHENYLALANYL-TRNA SYNTHETASE BETA CHAIN AND LEUCINE-RICH REPEAT-CONTAINING PROTEIN 47"/>
    <property type="match status" value="1"/>
</dbReference>
<dbReference type="Pfam" id="PF03483">
    <property type="entry name" value="B3_4"/>
    <property type="match status" value="1"/>
</dbReference>
<dbReference type="Pfam" id="PF03484">
    <property type="entry name" value="B5"/>
    <property type="match status" value="1"/>
</dbReference>
<dbReference type="Pfam" id="PF18262">
    <property type="entry name" value="PhetRS_B1"/>
    <property type="match status" value="1"/>
</dbReference>
<dbReference type="Pfam" id="PF17759">
    <property type="entry name" value="tRNA_synthFbeta"/>
    <property type="match status" value="1"/>
</dbReference>
<dbReference type="SMART" id="SM00873">
    <property type="entry name" value="B3_4"/>
    <property type="match status" value="1"/>
</dbReference>
<dbReference type="SMART" id="SM00874">
    <property type="entry name" value="B5"/>
    <property type="match status" value="1"/>
</dbReference>
<dbReference type="SUPFAM" id="SSF55681">
    <property type="entry name" value="Class II aaRS and biotin synthetases"/>
    <property type="match status" value="1"/>
</dbReference>
<dbReference type="SUPFAM" id="SSF56037">
    <property type="entry name" value="PheT/TilS domain"/>
    <property type="match status" value="1"/>
</dbReference>
<dbReference type="SUPFAM" id="SSF46955">
    <property type="entry name" value="Putative DNA-binding domain"/>
    <property type="match status" value="2"/>
</dbReference>
<dbReference type="PROSITE" id="PS51483">
    <property type="entry name" value="B5"/>
    <property type="match status" value="1"/>
</dbReference>
<comment type="catalytic activity">
    <reaction evidence="2">
        <text>tRNA(Phe) + L-phenylalanine + ATP = L-phenylalanyl-tRNA(Phe) + AMP + diphosphate + H(+)</text>
        <dbReference type="Rhea" id="RHEA:19413"/>
        <dbReference type="Rhea" id="RHEA-COMP:9668"/>
        <dbReference type="Rhea" id="RHEA-COMP:9699"/>
        <dbReference type="ChEBI" id="CHEBI:15378"/>
        <dbReference type="ChEBI" id="CHEBI:30616"/>
        <dbReference type="ChEBI" id="CHEBI:33019"/>
        <dbReference type="ChEBI" id="CHEBI:58095"/>
        <dbReference type="ChEBI" id="CHEBI:78442"/>
        <dbReference type="ChEBI" id="CHEBI:78531"/>
        <dbReference type="ChEBI" id="CHEBI:456215"/>
        <dbReference type="EC" id="6.1.1.20"/>
    </reaction>
    <physiologicalReaction direction="left-to-right" evidence="2">
        <dbReference type="Rhea" id="RHEA:19414"/>
    </physiologicalReaction>
</comment>
<comment type="cofactor">
    <cofactor evidence="1">
        <name>Mg(2+)</name>
        <dbReference type="ChEBI" id="CHEBI:18420"/>
    </cofactor>
</comment>
<comment type="subunit">
    <text evidence="2">Heterotetramer; dimer of two heterodimers formed by FARSA and FARSB.</text>
</comment>
<comment type="subcellular location">
    <subcellularLocation>
        <location evidence="2">Cytoplasm</location>
    </subcellularLocation>
</comment>
<comment type="similarity">
    <text evidence="4">Belongs to the phenylalanyl-tRNA synthetase beta subunit family. Type 2 subfamily.</text>
</comment>
<keyword id="KW-0030">Aminoacyl-tRNA synthetase</keyword>
<keyword id="KW-0067">ATP-binding</keyword>
<keyword id="KW-0963">Cytoplasm</keyword>
<keyword id="KW-0436">Ligase</keyword>
<keyword id="KW-0460">Magnesium</keyword>
<keyword id="KW-0479">Metal-binding</keyword>
<keyword id="KW-0547">Nucleotide-binding</keyword>
<keyword id="KW-0648">Protein biosynthesis</keyword>
<keyword id="KW-1185">Reference proteome</keyword>
<proteinExistence type="evidence at protein level"/>
<accession>Q9WUA2</accession>
<accession>Q9CWZ8</accession>
<organism>
    <name type="scientific">Mus musculus</name>
    <name type="common">Mouse</name>
    <dbReference type="NCBI Taxonomy" id="10090"/>
    <lineage>
        <taxon>Eukaryota</taxon>
        <taxon>Metazoa</taxon>
        <taxon>Chordata</taxon>
        <taxon>Craniata</taxon>
        <taxon>Vertebrata</taxon>
        <taxon>Euteleostomi</taxon>
        <taxon>Mammalia</taxon>
        <taxon>Eutheria</taxon>
        <taxon>Euarchontoglires</taxon>
        <taxon>Glires</taxon>
        <taxon>Rodentia</taxon>
        <taxon>Myomorpha</taxon>
        <taxon>Muroidea</taxon>
        <taxon>Muridae</taxon>
        <taxon>Murinae</taxon>
        <taxon>Mus</taxon>
        <taxon>Mus</taxon>
    </lineage>
</organism>